<feature type="chain" id="PRO_0000153640" description="Probable deoxyuridine 5'-triphosphate nucleotidohydrolase">
    <location>
        <begin position="1"/>
        <end position="171"/>
    </location>
</feature>
<sequence length="171" mass="19028">MALLSSNELRKLIKANPPLLENAVDTETQIQPNGLELTLKEIKTIEGAGAVDFDNSERKVPDAKPLEFGKDGWIHLPEGIYKVIFNEIVNIPMNLAAIAKPRSSLIRCGATLETAVWDAGYRGRSESMLVVYNPAGFKLKKNARIMQLLFYTLNTEVEEGYSGVYQNENTN</sequence>
<protein>
    <recommendedName>
        <fullName evidence="1">Probable deoxyuridine 5'-triphosphate nucleotidohydrolase</fullName>
        <shortName evidence="1">dUTPase</shortName>
        <ecNumber evidence="1">3.6.1.23</ecNumber>
    </recommendedName>
    <alternativeName>
        <fullName evidence="1">dUTP pyrophosphatase</fullName>
    </alternativeName>
</protein>
<evidence type="ECO:0000255" key="1">
    <source>
        <dbReference type="HAMAP-Rule" id="MF_00635"/>
    </source>
</evidence>
<proteinExistence type="inferred from homology"/>
<name>DUT_METMA</name>
<reference key="1">
    <citation type="journal article" date="2002" name="J. Mol. Microbiol. Biotechnol.">
        <title>The genome of Methanosarcina mazei: evidence for lateral gene transfer between Bacteria and Archaea.</title>
        <authorList>
            <person name="Deppenmeier U."/>
            <person name="Johann A."/>
            <person name="Hartsch T."/>
            <person name="Merkl R."/>
            <person name="Schmitz R.A."/>
            <person name="Martinez-Arias R."/>
            <person name="Henne A."/>
            <person name="Wiezer A."/>
            <person name="Baeumer S."/>
            <person name="Jacobi C."/>
            <person name="Brueggemann H."/>
            <person name="Lienard T."/>
            <person name="Christmann A."/>
            <person name="Boemecke M."/>
            <person name="Steckel S."/>
            <person name="Bhattacharyya A."/>
            <person name="Lykidis A."/>
            <person name="Overbeek R."/>
            <person name="Klenk H.-P."/>
            <person name="Gunsalus R.P."/>
            <person name="Fritz H.-J."/>
            <person name="Gottschalk G."/>
        </authorList>
    </citation>
    <scope>NUCLEOTIDE SEQUENCE [LARGE SCALE GENOMIC DNA]</scope>
    <source>
        <strain>ATCC BAA-159 / DSM 3647 / Goe1 / Go1 / JCM 11833 / OCM 88</strain>
    </source>
</reference>
<organism>
    <name type="scientific">Methanosarcina mazei (strain ATCC BAA-159 / DSM 3647 / Goe1 / Go1 / JCM 11833 / OCM 88)</name>
    <name type="common">Methanosarcina frisia</name>
    <dbReference type="NCBI Taxonomy" id="192952"/>
    <lineage>
        <taxon>Archaea</taxon>
        <taxon>Methanobacteriati</taxon>
        <taxon>Methanobacteriota</taxon>
        <taxon>Stenosarchaea group</taxon>
        <taxon>Methanomicrobia</taxon>
        <taxon>Methanosarcinales</taxon>
        <taxon>Methanosarcinaceae</taxon>
        <taxon>Methanosarcina</taxon>
    </lineage>
</organism>
<comment type="function">
    <text evidence="1">This enzyme is involved in nucleotide metabolism: it produces dUMP, the immediate precursor of thymidine nucleotides and it decreases the intracellular concentration of dUTP so that uracil cannot be incorporated into DNA.</text>
</comment>
<comment type="catalytic activity">
    <reaction evidence="1">
        <text>dUTP + H2O = dUMP + diphosphate + H(+)</text>
        <dbReference type="Rhea" id="RHEA:10248"/>
        <dbReference type="ChEBI" id="CHEBI:15377"/>
        <dbReference type="ChEBI" id="CHEBI:15378"/>
        <dbReference type="ChEBI" id="CHEBI:33019"/>
        <dbReference type="ChEBI" id="CHEBI:61555"/>
        <dbReference type="ChEBI" id="CHEBI:246422"/>
        <dbReference type="EC" id="3.6.1.23"/>
    </reaction>
</comment>
<comment type="pathway">
    <text evidence="1">Pyrimidine metabolism; dUMP biosynthesis; dUMP from dCTP (dUTP route): step 2/2.</text>
</comment>
<comment type="similarity">
    <text evidence="1">Belongs to the dCTP deaminase family. Archaeal dUTPase subfamily.</text>
</comment>
<accession>Q8PWG1</accession>
<keyword id="KW-0378">Hydrolase</keyword>
<keyword id="KW-0546">Nucleotide metabolism</keyword>
<gene>
    <name evidence="1" type="primary">dut</name>
    <name type="ordered locus">MM_1628</name>
</gene>
<dbReference type="EC" id="3.6.1.23" evidence="1"/>
<dbReference type="EMBL" id="AE008384">
    <property type="protein sequence ID" value="AAM31324.1"/>
    <property type="molecule type" value="Genomic_DNA"/>
</dbReference>
<dbReference type="RefSeq" id="WP_011033571.1">
    <property type="nucleotide sequence ID" value="NC_003901.1"/>
</dbReference>
<dbReference type="SMR" id="Q8PWG1"/>
<dbReference type="KEGG" id="mma:MM_1628"/>
<dbReference type="PATRIC" id="fig|192952.21.peg.1886"/>
<dbReference type="eggNOG" id="arCOG04048">
    <property type="taxonomic scope" value="Archaea"/>
</dbReference>
<dbReference type="HOGENOM" id="CLU_103451_2_0_2"/>
<dbReference type="UniPathway" id="UPA00610">
    <property type="reaction ID" value="UER00666"/>
</dbReference>
<dbReference type="Proteomes" id="UP000000595">
    <property type="component" value="Chromosome"/>
</dbReference>
<dbReference type="GO" id="GO:0008829">
    <property type="term" value="F:dCTP deaminase activity"/>
    <property type="evidence" value="ECO:0007669"/>
    <property type="project" value="InterPro"/>
</dbReference>
<dbReference type="GO" id="GO:0004170">
    <property type="term" value="F:dUTP diphosphatase activity"/>
    <property type="evidence" value="ECO:0007669"/>
    <property type="project" value="UniProtKB-UniRule"/>
</dbReference>
<dbReference type="GO" id="GO:0006226">
    <property type="term" value="P:dUMP biosynthetic process"/>
    <property type="evidence" value="ECO:0007669"/>
    <property type="project" value="UniProtKB-UniRule"/>
</dbReference>
<dbReference type="GO" id="GO:0006229">
    <property type="term" value="P:dUTP biosynthetic process"/>
    <property type="evidence" value="ECO:0007669"/>
    <property type="project" value="InterPro"/>
</dbReference>
<dbReference type="CDD" id="cd07557">
    <property type="entry name" value="trimeric_dUTPase"/>
    <property type="match status" value="1"/>
</dbReference>
<dbReference type="Gene3D" id="2.70.40.10">
    <property type="match status" value="1"/>
</dbReference>
<dbReference type="HAMAP" id="MF_00635">
    <property type="entry name" value="dUTPase_arch"/>
    <property type="match status" value="1"/>
</dbReference>
<dbReference type="InterPro" id="IPR011962">
    <property type="entry name" value="dCTP_deaminase"/>
</dbReference>
<dbReference type="InterPro" id="IPR036157">
    <property type="entry name" value="dUTPase-like_sf"/>
</dbReference>
<dbReference type="InterPro" id="IPR023537">
    <property type="entry name" value="dUTPase_archaeal"/>
</dbReference>
<dbReference type="InterPro" id="IPR033704">
    <property type="entry name" value="dUTPase_trimeric"/>
</dbReference>
<dbReference type="NCBIfam" id="NF002598">
    <property type="entry name" value="PRK02253.1"/>
    <property type="match status" value="1"/>
</dbReference>
<dbReference type="PANTHER" id="PTHR42680">
    <property type="entry name" value="DCTP DEAMINASE"/>
    <property type="match status" value="1"/>
</dbReference>
<dbReference type="PANTHER" id="PTHR42680:SF1">
    <property type="entry name" value="DEOXYURIDINE 5'-TRIPHOSPHATE NUCLEOTIDOHYDROLASE"/>
    <property type="match status" value="1"/>
</dbReference>
<dbReference type="Pfam" id="PF22769">
    <property type="entry name" value="DCD"/>
    <property type="match status" value="1"/>
</dbReference>
<dbReference type="SUPFAM" id="SSF51283">
    <property type="entry name" value="dUTPase-like"/>
    <property type="match status" value="1"/>
</dbReference>